<protein>
    <recommendedName>
        <fullName>Auxin-binding protein ABP19a</fullName>
    </recommendedName>
</protein>
<keyword id="KW-0052">Apoplast</keyword>
<keyword id="KW-0927">Auxin signaling pathway</keyword>
<keyword id="KW-0134">Cell wall</keyword>
<keyword id="KW-1015">Disulfide bond</keyword>
<keyword id="KW-0325">Glycoprotein</keyword>
<keyword id="KW-0464">Manganese</keyword>
<keyword id="KW-0479">Metal-binding</keyword>
<keyword id="KW-0675">Receptor</keyword>
<keyword id="KW-0964">Secreted</keyword>
<keyword id="KW-0732">Signal</keyword>
<sequence>MIFPIFFTFFLLLSSSHASVQDFCVADYKAPDGPAGYSCKKPAKVTINDFVYSGLGIAGNTTNIIKAAVTPAFAAQFPGVNGLGISLARLDLGPGGVIPFHTHPGASEVLLVVQGTIIAGFVASDNTPYLKTLKKGDIMVFPQGLLHFQVNGGGTPALAFPSFSSPSPGLQILDFALFKNDLPTELIAQTTFLDAAQIKKLKGVLGGTN</sequence>
<evidence type="ECO:0000250" key="1"/>
<evidence type="ECO:0000255" key="2"/>
<evidence type="ECO:0000305" key="3"/>
<gene>
    <name type="primary">ABP19A</name>
</gene>
<dbReference type="EMBL" id="U79114">
    <property type="protein sequence ID" value="AAD00295.1"/>
    <property type="molecule type" value="Genomic_DNA"/>
</dbReference>
<dbReference type="SMR" id="Q9ZRA4"/>
<dbReference type="GlyCosmos" id="Q9ZRA4">
    <property type="glycosylation" value="1 site, No reported glycans"/>
</dbReference>
<dbReference type="EnsemblPlants" id="ONH97605">
    <property type="protein sequence ID" value="ONH97605"/>
    <property type="gene ID" value="PRUPE_7G200300"/>
</dbReference>
<dbReference type="GeneID" id="18770577"/>
<dbReference type="Gramene" id="ONH97605">
    <property type="protein sequence ID" value="ONH97605"/>
    <property type="gene ID" value="PRUPE_7G200300"/>
</dbReference>
<dbReference type="KEGG" id="pper:18770577"/>
<dbReference type="eggNOG" id="ENOG502QT7C">
    <property type="taxonomic scope" value="Eukaryota"/>
</dbReference>
<dbReference type="HOGENOM" id="CLU_015790_0_2_1"/>
<dbReference type="OMA" id="VQGTICA"/>
<dbReference type="OrthoDB" id="1921208at2759"/>
<dbReference type="PhylomeDB" id="Q9ZRA4"/>
<dbReference type="GO" id="GO:0048046">
    <property type="term" value="C:apoplast"/>
    <property type="evidence" value="ECO:0007669"/>
    <property type="project" value="UniProtKB-SubCell"/>
</dbReference>
<dbReference type="GO" id="GO:0030145">
    <property type="term" value="F:manganese ion binding"/>
    <property type="evidence" value="ECO:0007669"/>
    <property type="project" value="InterPro"/>
</dbReference>
<dbReference type="GO" id="GO:0009734">
    <property type="term" value="P:auxin-activated signaling pathway"/>
    <property type="evidence" value="ECO:0007669"/>
    <property type="project" value="UniProtKB-KW"/>
</dbReference>
<dbReference type="CDD" id="cd02241">
    <property type="entry name" value="cupin_OxOx"/>
    <property type="match status" value="1"/>
</dbReference>
<dbReference type="FunFam" id="2.60.120.10:FF:000047">
    <property type="entry name" value="Auxin-binding protein ABP19a"/>
    <property type="match status" value="1"/>
</dbReference>
<dbReference type="Gene3D" id="2.60.120.10">
    <property type="entry name" value="Jelly Rolls"/>
    <property type="match status" value="1"/>
</dbReference>
<dbReference type="InterPro" id="IPR006045">
    <property type="entry name" value="Cupin_1"/>
</dbReference>
<dbReference type="InterPro" id="IPR001929">
    <property type="entry name" value="Germin"/>
</dbReference>
<dbReference type="InterPro" id="IPR019780">
    <property type="entry name" value="Germin_Mn-BS"/>
</dbReference>
<dbReference type="InterPro" id="IPR014710">
    <property type="entry name" value="RmlC-like_jellyroll"/>
</dbReference>
<dbReference type="InterPro" id="IPR011051">
    <property type="entry name" value="RmlC_Cupin_sf"/>
</dbReference>
<dbReference type="PANTHER" id="PTHR31238">
    <property type="entry name" value="GERMIN-LIKE PROTEIN SUBFAMILY 3 MEMBER 3"/>
    <property type="match status" value="1"/>
</dbReference>
<dbReference type="Pfam" id="PF00190">
    <property type="entry name" value="Cupin_1"/>
    <property type="match status" value="1"/>
</dbReference>
<dbReference type="PRINTS" id="PR00325">
    <property type="entry name" value="GERMIN"/>
</dbReference>
<dbReference type="SMART" id="SM00835">
    <property type="entry name" value="Cupin_1"/>
    <property type="match status" value="1"/>
</dbReference>
<dbReference type="SUPFAM" id="SSF51182">
    <property type="entry name" value="RmlC-like cupins"/>
    <property type="match status" value="1"/>
</dbReference>
<dbReference type="PROSITE" id="PS00725">
    <property type="entry name" value="GERMIN"/>
    <property type="match status" value="1"/>
</dbReference>
<comment type="function">
    <text>Probable receptor for the plant growth-promoting hormone auxin.</text>
</comment>
<comment type="subunit">
    <text>Interacts with ABP20.</text>
</comment>
<comment type="subcellular location">
    <subcellularLocation>
        <location>Secreted</location>
        <location>Extracellular space</location>
        <location>Apoplast</location>
    </subcellularLocation>
    <subcellularLocation>
        <location>Secreted</location>
        <location>Cell wall</location>
    </subcellularLocation>
</comment>
<comment type="similarity">
    <text evidence="3">Belongs to the germin family.</text>
</comment>
<accession>Q9ZRA4</accession>
<proteinExistence type="inferred from homology"/>
<reference key="1">
    <citation type="journal article" date="1998" name="Plant Cell Physiol.">
        <title>Cloning of genes encoding auxin-binding proteins (ABP19/20) from peach: significant peptide sequence similarity with germin-like proteins.</title>
        <authorList>
            <person name="Ohmiya A."/>
            <person name="Tanaka Y."/>
            <person name="Kadowaki K."/>
            <person name="Hayashi T."/>
        </authorList>
    </citation>
    <scope>NUCLEOTIDE SEQUENCE [GENOMIC DNA]</scope>
    <source>
        <strain>cv. Akatsuki</strain>
        <tissue>Shoot apex</tissue>
    </source>
</reference>
<organism>
    <name type="scientific">Prunus persica</name>
    <name type="common">Peach</name>
    <name type="synonym">Amygdalus persica</name>
    <dbReference type="NCBI Taxonomy" id="3760"/>
    <lineage>
        <taxon>Eukaryota</taxon>
        <taxon>Viridiplantae</taxon>
        <taxon>Streptophyta</taxon>
        <taxon>Embryophyta</taxon>
        <taxon>Tracheophyta</taxon>
        <taxon>Spermatophyta</taxon>
        <taxon>Magnoliopsida</taxon>
        <taxon>eudicotyledons</taxon>
        <taxon>Gunneridae</taxon>
        <taxon>Pentapetalae</taxon>
        <taxon>rosids</taxon>
        <taxon>fabids</taxon>
        <taxon>Rosales</taxon>
        <taxon>Rosaceae</taxon>
        <taxon>Amygdaloideae</taxon>
        <taxon>Amygdaleae</taxon>
        <taxon>Prunus</taxon>
    </lineage>
</organism>
<feature type="signal peptide" evidence="2">
    <location>
        <begin position="1"/>
        <end position="18"/>
    </location>
</feature>
<feature type="chain" id="PRO_0000010843" description="Auxin-binding protein ABP19a">
    <location>
        <begin position="19"/>
        <end position="209"/>
    </location>
</feature>
<feature type="domain" description="Cupin type-1" evidence="2">
    <location>
        <begin position="53"/>
        <end position="199"/>
    </location>
</feature>
<feature type="binding site" evidence="1">
    <location>
        <position position="101"/>
    </location>
    <ligand>
        <name>Mn(2+)</name>
        <dbReference type="ChEBI" id="CHEBI:29035"/>
    </ligand>
</feature>
<feature type="binding site" evidence="1">
    <location>
        <position position="103"/>
    </location>
    <ligand>
        <name>Mn(2+)</name>
        <dbReference type="ChEBI" id="CHEBI:29035"/>
    </ligand>
</feature>
<feature type="binding site" evidence="1">
    <location>
        <position position="108"/>
    </location>
    <ligand>
        <name>Mn(2+)</name>
        <dbReference type="ChEBI" id="CHEBI:29035"/>
    </ligand>
</feature>
<feature type="binding site" evidence="1">
    <location>
        <position position="147"/>
    </location>
    <ligand>
        <name>Mn(2+)</name>
        <dbReference type="ChEBI" id="CHEBI:29035"/>
    </ligand>
</feature>
<feature type="glycosylation site" description="N-linked (GlcNAc...) asparagine" evidence="2">
    <location>
        <position position="60"/>
    </location>
</feature>
<feature type="disulfide bond" evidence="1">
    <location>
        <begin position="24"/>
        <end position="39"/>
    </location>
</feature>
<name>AB19A_PRUPE</name>